<reference key="1">
    <citation type="submission" date="2009-06" db="EMBL/GenBank/DDBJ databases">
        <title>Complete sequence of chromosome of Geopacillus sp. WCH70.</title>
        <authorList>
            <consortium name="US DOE Joint Genome Institute"/>
            <person name="Lucas S."/>
            <person name="Copeland A."/>
            <person name="Lapidus A."/>
            <person name="Glavina del Rio T."/>
            <person name="Dalin E."/>
            <person name="Tice H."/>
            <person name="Bruce D."/>
            <person name="Goodwin L."/>
            <person name="Pitluck S."/>
            <person name="Chertkov O."/>
            <person name="Brettin T."/>
            <person name="Detter J.C."/>
            <person name="Han C."/>
            <person name="Larimer F."/>
            <person name="Land M."/>
            <person name="Hauser L."/>
            <person name="Kyrpides N."/>
            <person name="Mikhailova N."/>
            <person name="Brumm P."/>
            <person name="Mead D.A."/>
            <person name="Richardson P."/>
        </authorList>
    </citation>
    <scope>NUCLEOTIDE SEQUENCE [LARGE SCALE GENOMIC DNA]</scope>
    <source>
        <strain>WCH70</strain>
    </source>
</reference>
<keyword id="KW-0067">ATP-binding</keyword>
<keyword id="KW-0436">Ligase</keyword>
<keyword id="KW-0547">Nucleotide-binding</keyword>
<keyword id="KW-0648">Protein biosynthesis</keyword>
<comment type="function">
    <text evidence="1">Allows the formation of correctly charged Gln-tRNA(Gln) through the transamidation of misacylated Glu-tRNA(Gln) in organisms which lack glutaminyl-tRNA synthetase. The reaction takes place in the presence of glutamine and ATP through an activated gamma-phospho-Glu-tRNA(Gln).</text>
</comment>
<comment type="catalytic activity">
    <reaction evidence="1">
        <text>L-glutamyl-tRNA(Gln) + L-glutamine + ATP + H2O = L-glutaminyl-tRNA(Gln) + L-glutamate + ADP + phosphate + H(+)</text>
        <dbReference type="Rhea" id="RHEA:17521"/>
        <dbReference type="Rhea" id="RHEA-COMP:9681"/>
        <dbReference type="Rhea" id="RHEA-COMP:9684"/>
        <dbReference type="ChEBI" id="CHEBI:15377"/>
        <dbReference type="ChEBI" id="CHEBI:15378"/>
        <dbReference type="ChEBI" id="CHEBI:29985"/>
        <dbReference type="ChEBI" id="CHEBI:30616"/>
        <dbReference type="ChEBI" id="CHEBI:43474"/>
        <dbReference type="ChEBI" id="CHEBI:58359"/>
        <dbReference type="ChEBI" id="CHEBI:78520"/>
        <dbReference type="ChEBI" id="CHEBI:78521"/>
        <dbReference type="ChEBI" id="CHEBI:456216"/>
        <dbReference type="EC" id="6.3.5.7"/>
    </reaction>
</comment>
<comment type="subunit">
    <text evidence="1">Heterotrimer of A, B and C subunits.</text>
</comment>
<comment type="similarity">
    <text evidence="1">Belongs to the amidase family. GatA subfamily.</text>
</comment>
<name>GATA_GEOSW</name>
<proteinExistence type="inferred from homology"/>
<protein>
    <recommendedName>
        <fullName evidence="1">Glutamyl-tRNA(Gln) amidotransferase subunit A</fullName>
        <shortName evidence="1">Glu-ADT subunit A</shortName>
        <ecNumber evidence="1">6.3.5.7</ecNumber>
    </recommendedName>
</protein>
<organism>
    <name type="scientific">Geobacillus sp. (strain WCH70)</name>
    <dbReference type="NCBI Taxonomy" id="471223"/>
    <lineage>
        <taxon>Bacteria</taxon>
        <taxon>Bacillati</taxon>
        <taxon>Bacillota</taxon>
        <taxon>Bacilli</taxon>
        <taxon>Bacillales</taxon>
        <taxon>Anoxybacillaceae</taxon>
        <taxon>Geobacillus</taxon>
    </lineage>
</organism>
<dbReference type="EC" id="6.3.5.7" evidence="1"/>
<dbReference type="EMBL" id="CP001638">
    <property type="protein sequence ID" value="ACS23214.1"/>
    <property type="molecule type" value="Genomic_DNA"/>
</dbReference>
<dbReference type="SMR" id="C5D4K6"/>
<dbReference type="STRING" id="471223.GWCH70_0287"/>
<dbReference type="KEGG" id="gwc:GWCH70_0287"/>
<dbReference type="eggNOG" id="COG0154">
    <property type="taxonomic scope" value="Bacteria"/>
</dbReference>
<dbReference type="HOGENOM" id="CLU_009600_0_3_9"/>
<dbReference type="OrthoDB" id="9811471at2"/>
<dbReference type="GO" id="GO:0030956">
    <property type="term" value="C:glutamyl-tRNA(Gln) amidotransferase complex"/>
    <property type="evidence" value="ECO:0007669"/>
    <property type="project" value="InterPro"/>
</dbReference>
<dbReference type="GO" id="GO:0005524">
    <property type="term" value="F:ATP binding"/>
    <property type="evidence" value="ECO:0007669"/>
    <property type="project" value="UniProtKB-KW"/>
</dbReference>
<dbReference type="GO" id="GO:0050567">
    <property type="term" value="F:glutaminyl-tRNA synthase (glutamine-hydrolyzing) activity"/>
    <property type="evidence" value="ECO:0007669"/>
    <property type="project" value="UniProtKB-UniRule"/>
</dbReference>
<dbReference type="GO" id="GO:0006412">
    <property type="term" value="P:translation"/>
    <property type="evidence" value="ECO:0007669"/>
    <property type="project" value="UniProtKB-UniRule"/>
</dbReference>
<dbReference type="Gene3D" id="3.90.1300.10">
    <property type="entry name" value="Amidase signature (AS) domain"/>
    <property type="match status" value="1"/>
</dbReference>
<dbReference type="HAMAP" id="MF_00120">
    <property type="entry name" value="GatA"/>
    <property type="match status" value="1"/>
</dbReference>
<dbReference type="InterPro" id="IPR000120">
    <property type="entry name" value="Amidase"/>
</dbReference>
<dbReference type="InterPro" id="IPR020556">
    <property type="entry name" value="Amidase_CS"/>
</dbReference>
<dbReference type="InterPro" id="IPR023631">
    <property type="entry name" value="Amidase_dom"/>
</dbReference>
<dbReference type="InterPro" id="IPR036928">
    <property type="entry name" value="AS_sf"/>
</dbReference>
<dbReference type="InterPro" id="IPR004412">
    <property type="entry name" value="GatA"/>
</dbReference>
<dbReference type="NCBIfam" id="TIGR00132">
    <property type="entry name" value="gatA"/>
    <property type="match status" value="1"/>
</dbReference>
<dbReference type="PANTHER" id="PTHR11895:SF151">
    <property type="entry name" value="GLUTAMYL-TRNA(GLN) AMIDOTRANSFERASE SUBUNIT A"/>
    <property type="match status" value="1"/>
</dbReference>
<dbReference type="PANTHER" id="PTHR11895">
    <property type="entry name" value="TRANSAMIDASE"/>
    <property type="match status" value="1"/>
</dbReference>
<dbReference type="Pfam" id="PF01425">
    <property type="entry name" value="Amidase"/>
    <property type="match status" value="1"/>
</dbReference>
<dbReference type="SUPFAM" id="SSF75304">
    <property type="entry name" value="Amidase signature (AS) enzymes"/>
    <property type="match status" value="1"/>
</dbReference>
<dbReference type="PROSITE" id="PS00571">
    <property type="entry name" value="AMIDASES"/>
    <property type="match status" value="1"/>
</dbReference>
<feature type="chain" id="PRO_1000203038" description="Glutamyl-tRNA(Gln) amidotransferase subunit A">
    <location>
        <begin position="1"/>
        <end position="486"/>
    </location>
</feature>
<feature type="active site" description="Charge relay system" evidence="1">
    <location>
        <position position="80"/>
    </location>
</feature>
<feature type="active site" description="Charge relay system" evidence="1">
    <location>
        <position position="155"/>
    </location>
</feature>
<feature type="active site" description="Acyl-ester intermediate" evidence="1">
    <location>
        <position position="179"/>
    </location>
</feature>
<accession>C5D4K6</accession>
<sequence>MSLFDHKISELHTLLQKKEISVSDLVDESFRRIGEVEEQVQAFLTLNEENARAKAKELDDKLAKEGNDFGVLFGMPIGIKDNIVTKGLRTTCASKILYNFDPIYDATVMERLNEAGAITIGKLNMDEFAMGSSTENSGFQLTRNPWDLERVPGGSSGGSAAAVAAGEVPFALGSDTGGSIRQPAAFCGVVGLKPTYGRVSRFGLVAFASSLDQIGPITRTVEDNAYLLQVIAGLDPMDSTSANVEVPNYVEALTGDIKGLKIAVPKEYLGEGVAEEVRQSVLDALKVLEKLGATWEEVSLPHSKYALATYYLLASSEASANLARFDGVRYGYRTDNAKNLIDMYKQTRSEGFGNEVKRRIMLGTFALSAGYYDAYYKKAQQVRTLIKQDFEKVFEKYDVIIGPTTPTPAFKIGEKTHDPLTMYANDILTIPVNLAGVPGISVPCGFVNGLPVGLQIIGKHFDESTIYRVAHAFEQATDYHKQKPAL</sequence>
<evidence type="ECO:0000255" key="1">
    <source>
        <dbReference type="HAMAP-Rule" id="MF_00120"/>
    </source>
</evidence>
<gene>
    <name evidence="1" type="primary">gatA</name>
    <name type="ordered locus">GWCH70_0287</name>
</gene>